<organism>
    <name type="scientific">Acinetobacter baumannii (strain AB307-0294)</name>
    <dbReference type="NCBI Taxonomy" id="557600"/>
    <lineage>
        <taxon>Bacteria</taxon>
        <taxon>Pseudomonadati</taxon>
        <taxon>Pseudomonadota</taxon>
        <taxon>Gammaproteobacteria</taxon>
        <taxon>Moraxellales</taxon>
        <taxon>Moraxellaceae</taxon>
        <taxon>Acinetobacter</taxon>
        <taxon>Acinetobacter calcoaceticus/baumannii complex</taxon>
    </lineage>
</organism>
<sequence>MLTYPNIDPVAIHLGPLQVHWYGLMYLLAFLCAWGLASYRAKQRDGWTSDMVSDLVFYGALGVVLGGRIGYVLFYEFDKFLENPIWLFQVWTGGMSFHGGFLGVMIAMLFWCKKYQKTWFQTLDFVAPCVPTGLMFGRIGNFIGGELYGRAVTDPNYPFGMIFPTDPLHLVRHPSQIYQALCEGLLLFIILWWFSSKPRPRMAVSALFLMGYGVARFVMEFFRQPDADQGFILFGWMTKGQILTVPMLLIGLWMMWYAYQKKIYDWGPQKNS</sequence>
<feature type="chain" id="PRO_1000137388" description="Phosphatidylglycerol--prolipoprotein diacylglyceryl transferase">
    <location>
        <begin position="1"/>
        <end position="272"/>
    </location>
</feature>
<feature type="transmembrane region" description="Helical" evidence="1">
    <location>
        <begin position="17"/>
        <end position="37"/>
    </location>
</feature>
<feature type="transmembrane region" description="Helical" evidence="1">
    <location>
        <begin position="55"/>
        <end position="75"/>
    </location>
</feature>
<feature type="transmembrane region" description="Helical" evidence="1">
    <location>
        <begin position="90"/>
        <end position="110"/>
    </location>
</feature>
<feature type="transmembrane region" description="Helical" evidence="1">
    <location>
        <begin position="125"/>
        <end position="145"/>
    </location>
</feature>
<feature type="transmembrane region" description="Helical" evidence="1">
    <location>
        <begin position="174"/>
        <end position="194"/>
    </location>
</feature>
<feature type="transmembrane region" description="Helical" evidence="1">
    <location>
        <begin position="202"/>
        <end position="222"/>
    </location>
</feature>
<feature type="transmembrane region" description="Helical" evidence="1">
    <location>
        <begin position="230"/>
        <end position="250"/>
    </location>
</feature>
<feature type="binding site" evidence="1">
    <location>
        <position position="138"/>
    </location>
    <ligand>
        <name>a 1,2-diacyl-sn-glycero-3-phospho-(1'-sn-glycerol)</name>
        <dbReference type="ChEBI" id="CHEBI:64716"/>
    </ligand>
</feature>
<protein>
    <recommendedName>
        <fullName evidence="1">Phosphatidylglycerol--prolipoprotein diacylglyceryl transferase</fullName>
        <ecNumber evidence="1">2.5.1.145</ecNumber>
    </recommendedName>
</protein>
<reference key="1">
    <citation type="journal article" date="2008" name="J. Bacteriol.">
        <title>Comparative genome sequence analysis of multidrug-resistant Acinetobacter baumannii.</title>
        <authorList>
            <person name="Adams M.D."/>
            <person name="Goglin K."/>
            <person name="Molyneaux N."/>
            <person name="Hujer K.M."/>
            <person name="Lavender H."/>
            <person name="Jamison J.J."/>
            <person name="MacDonald I.J."/>
            <person name="Martin K.M."/>
            <person name="Russo T."/>
            <person name="Campagnari A.A."/>
            <person name="Hujer A.M."/>
            <person name="Bonomo R.A."/>
            <person name="Gill S.R."/>
        </authorList>
    </citation>
    <scope>NUCLEOTIDE SEQUENCE [LARGE SCALE GENOMIC DNA]</scope>
    <source>
        <strain>AB307-0294</strain>
    </source>
</reference>
<keyword id="KW-0997">Cell inner membrane</keyword>
<keyword id="KW-1003">Cell membrane</keyword>
<keyword id="KW-0472">Membrane</keyword>
<keyword id="KW-0808">Transferase</keyword>
<keyword id="KW-0812">Transmembrane</keyword>
<keyword id="KW-1133">Transmembrane helix</keyword>
<accession>B7H0P1</accession>
<name>LGT_ACIB3</name>
<comment type="function">
    <text evidence="1">Catalyzes the transfer of the diacylglyceryl group from phosphatidylglycerol to the sulfhydryl group of the N-terminal cysteine of a prolipoprotein, the first step in the formation of mature lipoproteins.</text>
</comment>
<comment type="catalytic activity">
    <reaction evidence="1">
        <text>L-cysteinyl-[prolipoprotein] + a 1,2-diacyl-sn-glycero-3-phospho-(1'-sn-glycerol) = an S-1,2-diacyl-sn-glyceryl-L-cysteinyl-[prolipoprotein] + sn-glycerol 1-phosphate + H(+)</text>
        <dbReference type="Rhea" id="RHEA:56712"/>
        <dbReference type="Rhea" id="RHEA-COMP:14679"/>
        <dbReference type="Rhea" id="RHEA-COMP:14680"/>
        <dbReference type="ChEBI" id="CHEBI:15378"/>
        <dbReference type="ChEBI" id="CHEBI:29950"/>
        <dbReference type="ChEBI" id="CHEBI:57685"/>
        <dbReference type="ChEBI" id="CHEBI:64716"/>
        <dbReference type="ChEBI" id="CHEBI:140658"/>
        <dbReference type="EC" id="2.5.1.145"/>
    </reaction>
</comment>
<comment type="pathway">
    <text evidence="1">Protein modification; lipoprotein biosynthesis (diacylglyceryl transfer).</text>
</comment>
<comment type="subcellular location">
    <subcellularLocation>
        <location evidence="1">Cell inner membrane</location>
        <topology evidence="1">Multi-pass membrane protein</topology>
    </subcellularLocation>
</comment>
<comment type="similarity">
    <text evidence="1">Belongs to the Lgt family.</text>
</comment>
<gene>
    <name evidence="1" type="primary">lgt</name>
    <name type="ordered locus">ABBFA_003073</name>
</gene>
<proteinExistence type="inferred from homology"/>
<evidence type="ECO:0000255" key="1">
    <source>
        <dbReference type="HAMAP-Rule" id="MF_01147"/>
    </source>
</evidence>
<dbReference type="EC" id="2.5.1.145" evidence="1"/>
<dbReference type="EMBL" id="CP001172">
    <property type="protein sequence ID" value="ACJ59064.1"/>
    <property type="molecule type" value="Genomic_DNA"/>
</dbReference>
<dbReference type="RefSeq" id="WP_000959085.1">
    <property type="nucleotide sequence ID" value="NZ_CP001172.1"/>
</dbReference>
<dbReference type="SMR" id="B7H0P1"/>
<dbReference type="HOGENOM" id="CLU_013386_1_0_6"/>
<dbReference type="UniPathway" id="UPA00664"/>
<dbReference type="Proteomes" id="UP000006924">
    <property type="component" value="Chromosome"/>
</dbReference>
<dbReference type="GO" id="GO:0005886">
    <property type="term" value="C:plasma membrane"/>
    <property type="evidence" value="ECO:0007669"/>
    <property type="project" value="UniProtKB-SubCell"/>
</dbReference>
<dbReference type="GO" id="GO:0008961">
    <property type="term" value="F:phosphatidylglycerol-prolipoprotein diacylglyceryl transferase activity"/>
    <property type="evidence" value="ECO:0007669"/>
    <property type="project" value="UniProtKB-UniRule"/>
</dbReference>
<dbReference type="GO" id="GO:0042158">
    <property type="term" value="P:lipoprotein biosynthetic process"/>
    <property type="evidence" value="ECO:0007669"/>
    <property type="project" value="UniProtKB-UniRule"/>
</dbReference>
<dbReference type="HAMAP" id="MF_01147">
    <property type="entry name" value="Lgt"/>
    <property type="match status" value="1"/>
</dbReference>
<dbReference type="InterPro" id="IPR001640">
    <property type="entry name" value="Lgt"/>
</dbReference>
<dbReference type="NCBIfam" id="TIGR00544">
    <property type="entry name" value="lgt"/>
    <property type="match status" value="1"/>
</dbReference>
<dbReference type="PANTHER" id="PTHR30589:SF0">
    <property type="entry name" value="PHOSPHATIDYLGLYCEROL--PROLIPOPROTEIN DIACYLGLYCERYL TRANSFERASE"/>
    <property type="match status" value="1"/>
</dbReference>
<dbReference type="PANTHER" id="PTHR30589">
    <property type="entry name" value="PROLIPOPROTEIN DIACYLGLYCERYL TRANSFERASE"/>
    <property type="match status" value="1"/>
</dbReference>
<dbReference type="Pfam" id="PF01790">
    <property type="entry name" value="LGT"/>
    <property type="match status" value="1"/>
</dbReference>
<dbReference type="PROSITE" id="PS01311">
    <property type="entry name" value="LGT"/>
    <property type="match status" value="1"/>
</dbReference>